<name>UBIE_ENT38</name>
<proteinExistence type="inferred from homology"/>
<accession>A4WFY5</accession>
<keyword id="KW-0474">Menaquinone biosynthesis</keyword>
<keyword id="KW-0489">Methyltransferase</keyword>
<keyword id="KW-0949">S-adenosyl-L-methionine</keyword>
<keyword id="KW-0808">Transferase</keyword>
<keyword id="KW-0831">Ubiquinone biosynthesis</keyword>
<organism>
    <name type="scientific">Enterobacter sp. (strain 638)</name>
    <dbReference type="NCBI Taxonomy" id="399742"/>
    <lineage>
        <taxon>Bacteria</taxon>
        <taxon>Pseudomonadati</taxon>
        <taxon>Pseudomonadota</taxon>
        <taxon>Gammaproteobacteria</taxon>
        <taxon>Enterobacterales</taxon>
        <taxon>Enterobacteriaceae</taxon>
        <taxon>Enterobacter</taxon>
    </lineage>
</organism>
<dbReference type="EC" id="2.1.1.163" evidence="1"/>
<dbReference type="EC" id="2.1.1.201" evidence="1"/>
<dbReference type="EMBL" id="CP000653">
    <property type="protein sequence ID" value="ABP62615.1"/>
    <property type="molecule type" value="Genomic_DNA"/>
</dbReference>
<dbReference type="RefSeq" id="WP_015960920.1">
    <property type="nucleotide sequence ID" value="NC_009436.1"/>
</dbReference>
<dbReference type="SMR" id="A4WFY5"/>
<dbReference type="STRING" id="399742.Ent638_3960"/>
<dbReference type="GeneID" id="93306939"/>
<dbReference type="KEGG" id="ent:Ent638_3960"/>
<dbReference type="eggNOG" id="COG2226">
    <property type="taxonomic scope" value="Bacteria"/>
</dbReference>
<dbReference type="HOGENOM" id="CLU_037990_0_0_6"/>
<dbReference type="OrthoDB" id="9808140at2"/>
<dbReference type="UniPathway" id="UPA00079">
    <property type="reaction ID" value="UER00169"/>
</dbReference>
<dbReference type="UniPathway" id="UPA00232"/>
<dbReference type="Proteomes" id="UP000000230">
    <property type="component" value="Chromosome"/>
</dbReference>
<dbReference type="GO" id="GO:0008425">
    <property type="term" value="F:2-methoxy-6-polyprenyl-1,4-benzoquinol methyltransferase activity"/>
    <property type="evidence" value="ECO:0007669"/>
    <property type="project" value="UniProtKB-UniRule"/>
</dbReference>
<dbReference type="GO" id="GO:0043770">
    <property type="term" value="F:demethylmenaquinone methyltransferase activity"/>
    <property type="evidence" value="ECO:0007669"/>
    <property type="project" value="UniProtKB-UniRule"/>
</dbReference>
<dbReference type="GO" id="GO:0009060">
    <property type="term" value="P:aerobic respiration"/>
    <property type="evidence" value="ECO:0007669"/>
    <property type="project" value="UniProtKB-UniRule"/>
</dbReference>
<dbReference type="GO" id="GO:0009234">
    <property type="term" value="P:menaquinone biosynthetic process"/>
    <property type="evidence" value="ECO:0007669"/>
    <property type="project" value="UniProtKB-UniRule"/>
</dbReference>
<dbReference type="GO" id="GO:0032259">
    <property type="term" value="P:methylation"/>
    <property type="evidence" value="ECO:0007669"/>
    <property type="project" value="UniProtKB-KW"/>
</dbReference>
<dbReference type="CDD" id="cd02440">
    <property type="entry name" value="AdoMet_MTases"/>
    <property type="match status" value="1"/>
</dbReference>
<dbReference type="FunFam" id="3.40.50.150:FF:000014">
    <property type="entry name" value="Ubiquinone/menaquinone biosynthesis C-methyltransferase UbiE"/>
    <property type="match status" value="1"/>
</dbReference>
<dbReference type="Gene3D" id="3.40.50.150">
    <property type="entry name" value="Vaccinia Virus protein VP39"/>
    <property type="match status" value="1"/>
</dbReference>
<dbReference type="HAMAP" id="MF_01813">
    <property type="entry name" value="MenG_UbiE_methyltr"/>
    <property type="match status" value="1"/>
</dbReference>
<dbReference type="InterPro" id="IPR029063">
    <property type="entry name" value="SAM-dependent_MTases_sf"/>
</dbReference>
<dbReference type="InterPro" id="IPR004033">
    <property type="entry name" value="UbiE/COQ5_MeTrFase"/>
</dbReference>
<dbReference type="InterPro" id="IPR023576">
    <property type="entry name" value="UbiE/COQ5_MeTrFase_CS"/>
</dbReference>
<dbReference type="NCBIfam" id="TIGR01934">
    <property type="entry name" value="MenG_MenH_UbiE"/>
    <property type="match status" value="1"/>
</dbReference>
<dbReference type="NCBIfam" id="NF001240">
    <property type="entry name" value="PRK00216.1-1"/>
    <property type="match status" value="1"/>
</dbReference>
<dbReference type="NCBIfam" id="NF001244">
    <property type="entry name" value="PRK00216.1-5"/>
    <property type="match status" value="1"/>
</dbReference>
<dbReference type="PANTHER" id="PTHR43591:SF24">
    <property type="entry name" value="2-METHOXY-6-POLYPRENYL-1,4-BENZOQUINOL METHYLASE, MITOCHONDRIAL"/>
    <property type="match status" value="1"/>
</dbReference>
<dbReference type="PANTHER" id="PTHR43591">
    <property type="entry name" value="METHYLTRANSFERASE"/>
    <property type="match status" value="1"/>
</dbReference>
<dbReference type="Pfam" id="PF01209">
    <property type="entry name" value="Ubie_methyltran"/>
    <property type="match status" value="1"/>
</dbReference>
<dbReference type="SUPFAM" id="SSF53335">
    <property type="entry name" value="S-adenosyl-L-methionine-dependent methyltransferases"/>
    <property type="match status" value="1"/>
</dbReference>
<dbReference type="PROSITE" id="PS51608">
    <property type="entry name" value="SAM_MT_UBIE"/>
    <property type="match status" value="1"/>
</dbReference>
<dbReference type="PROSITE" id="PS01183">
    <property type="entry name" value="UBIE_1"/>
    <property type="match status" value="1"/>
</dbReference>
<dbReference type="PROSITE" id="PS01184">
    <property type="entry name" value="UBIE_2"/>
    <property type="match status" value="1"/>
</dbReference>
<comment type="function">
    <text evidence="1">Methyltransferase required for the conversion of demethylmenaquinol (DMKH2) to menaquinol (MKH2) and the conversion of 2-polyprenyl-6-methoxy-1,4-benzoquinol (DDMQH2) to 2-polyprenyl-3-methyl-6-methoxy-1,4-benzoquinol (DMQH2).</text>
</comment>
<comment type="catalytic activity">
    <reaction evidence="1">
        <text>a 2-demethylmenaquinol + S-adenosyl-L-methionine = a menaquinol + S-adenosyl-L-homocysteine + H(+)</text>
        <dbReference type="Rhea" id="RHEA:42640"/>
        <dbReference type="Rhea" id="RHEA-COMP:9539"/>
        <dbReference type="Rhea" id="RHEA-COMP:9563"/>
        <dbReference type="ChEBI" id="CHEBI:15378"/>
        <dbReference type="ChEBI" id="CHEBI:18151"/>
        <dbReference type="ChEBI" id="CHEBI:55437"/>
        <dbReference type="ChEBI" id="CHEBI:57856"/>
        <dbReference type="ChEBI" id="CHEBI:59789"/>
        <dbReference type="EC" id="2.1.1.163"/>
    </reaction>
</comment>
<comment type="catalytic activity">
    <reaction evidence="1">
        <text>a 2-methoxy-6-(all-trans-polyprenyl)benzene-1,4-diol + S-adenosyl-L-methionine = a 5-methoxy-2-methyl-3-(all-trans-polyprenyl)benzene-1,4-diol + S-adenosyl-L-homocysteine + H(+)</text>
        <dbReference type="Rhea" id="RHEA:28286"/>
        <dbReference type="Rhea" id="RHEA-COMP:10858"/>
        <dbReference type="Rhea" id="RHEA-COMP:10859"/>
        <dbReference type="ChEBI" id="CHEBI:15378"/>
        <dbReference type="ChEBI" id="CHEBI:57856"/>
        <dbReference type="ChEBI" id="CHEBI:59789"/>
        <dbReference type="ChEBI" id="CHEBI:84166"/>
        <dbReference type="ChEBI" id="CHEBI:84167"/>
        <dbReference type="EC" id="2.1.1.201"/>
    </reaction>
</comment>
<comment type="pathway">
    <text evidence="1">Quinol/quinone metabolism; menaquinone biosynthesis; menaquinol from 1,4-dihydroxy-2-naphthoate: step 2/2.</text>
</comment>
<comment type="pathway">
    <text evidence="1">Cofactor biosynthesis; ubiquinone biosynthesis.</text>
</comment>
<comment type="similarity">
    <text evidence="1">Belongs to the class I-like SAM-binding methyltransferase superfamily. MenG/UbiE family.</text>
</comment>
<protein>
    <recommendedName>
        <fullName evidence="1">Ubiquinone/menaquinone biosynthesis C-methyltransferase UbiE</fullName>
        <ecNumber evidence="1">2.1.1.163</ecNumber>
        <ecNumber evidence="1">2.1.1.201</ecNumber>
    </recommendedName>
    <alternativeName>
        <fullName evidence="1">2-methoxy-6-polyprenyl-1,4-benzoquinol methylase</fullName>
    </alternativeName>
    <alternativeName>
        <fullName evidence="1">Demethylmenaquinone methyltransferase</fullName>
    </alternativeName>
</protein>
<gene>
    <name evidence="1" type="primary">ubiE</name>
    <name type="ordered locus">Ent638_3960</name>
</gene>
<reference key="1">
    <citation type="journal article" date="2010" name="PLoS Genet.">
        <title>Genome sequence of the plant growth promoting endophytic bacterium Enterobacter sp. 638.</title>
        <authorList>
            <person name="Taghavi S."/>
            <person name="van der Lelie D."/>
            <person name="Hoffman A."/>
            <person name="Zhang Y.B."/>
            <person name="Walla M.D."/>
            <person name="Vangronsveld J."/>
            <person name="Newman L."/>
            <person name="Monchy S."/>
        </authorList>
    </citation>
    <scope>NUCLEOTIDE SEQUENCE [LARGE SCALE GENOMIC DNA]</scope>
    <source>
        <strain>638</strain>
    </source>
</reference>
<evidence type="ECO:0000255" key="1">
    <source>
        <dbReference type="HAMAP-Rule" id="MF_01813"/>
    </source>
</evidence>
<feature type="chain" id="PRO_1000070199" description="Ubiquinone/menaquinone biosynthesis C-methyltransferase UbiE">
    <location>
        <begin position="1"/>
        <end position="251"/>
    </location>
</feature>
<feature type="binding site" evidence="1">
    <location>
        <position position="74"/>
    </location>
    <ligand>
        <name>S-adenosyl-L-methionine</name>
        <dbReference type="ChEBI" id="CHEBI:59789"/>
    </ligand>
</feature>
<feature type="binding site" evidence="1">
    <location>
        <position position="95"/>
    </location>
    <ligand>
        <name>S-adenosyl-L-methionine</name>
        <dbReference type="ChEBI" id="CHEBI:59789"/>
    </ligand>
</feature>
<feature type="binding site" evidence="1">
    <location>
        <begin position="123"/>
        <end position="124"/>
    </location>
    <ligand>
        <name>S-adenosyl-L-methionine</name>
        <dbReference type="ChEBI" id="CHEBI:59789"/>
    </ligand>
</feature>
<feature type="binding site" evidence="1">
    <location>
        <position position="140"/>
    </location>
    <ligand>
        <name>S-adenosyl-L-methionine</name>
        <dbReference type="ChEBI" id="CHEBI:59789"/>
    </ligand>
</feature>
<sequence length="251" mass="28041">MVDDSQDTTHFGFQTVAKAQKADMVAHVFHSVAAKYDVMNDLMSFGIHRLWKRFTIDCSGVRRGQTVLDLAGGTGDLTAKFSRMVGDTGRVVLADINDSMLKMGREKLRNIGVVGNVEYVQANAEALPFPDNTFDCITISFGLRNVTDKEKALRSMYRVLKPGGRLLVLEFSKPIIEPLSKAYDAYSFHVLPRIGEMVANDGESYRYLAESIRMHPDQDTLKAMMQDAGLENVEYFNLTAGVVALHRGYKF</sequence>